<name>PQQD_XANOM</name>
<dbReference type="EMBL" id="AP008229">
    <property type="protein sequence ID" value="BAE68389.1"/>
    <property type="molecule type" value="Genomic_DNA"/>
</dbReference>
<dbReference type="RefSeq" id="WP_011408173.1">
    <property type="nucleotide sequence ID" value="NC_007705.1"/>
</dbReference>
<dbReference type="SMR" id="Q2P4Y8"/>
<dbReference type="KEGG" id="xom:XOO1634"/>
<dbReference type="HOGENOM" id="CLU_163864_0_0_6"/>
<dbReference type="UniPathway" id="UPA00539"/>
<dbReference type="GO" id="GO:0048038">
    <property type="term" value="F:quinone binding"/>
    <property type="evidence" value="ECO:0007669"/>
    <property type="project" value="InterPro"/>
</dbReference>
<dbReference type="GO" id="GO:0018189">
    <property type="term" value="P:pyrroloquinoline quinone biosynthetic process"/>
    <property type="evidence" value="ECO:0007669"/>
    <property type="project" value="UniProtKB-UniRule"/>
</dbReference>
<dbReference type="Gene3D" id="1.10.10.1150">
    <property type="entry name" value="Coenzyme PQQ synthesis protein D (PqqD)"/>
    <property type="match status" value="1"/>
</dbReference>
<dbReference type="HAMAP" id="MF_00655">
    <property type="entry name" value="PQQ_syn_PqqD"/>
    <property type="match status" value="1"/>
</dbReference>
<dbReference type="InterPro" id="IPR008792">
    <property type="entry name" value="PQQD"/>
</dbReference>
<dbReference type="InterPro" id="IPR022479">
    <property type="entry name" value="PqqD_bac"/>
</dbReference>
<dbReference type="InterPro" id="IPR041881">
    <property type="entry name" value="PqqD_sf"/>
</dbReference>
<dbReference type="NCBIfam" id="TIGR03859">
    <property type="entry name" value="PQQ_PqqD"/>
    <property type="match status" value="1"/>
</dbReference>
<dbReference type="Pfam" id="PF05402">
    <property type="entry name" value="PqqD"/>
    <property type="match status" value="1"/>
</dbReference>
<accession>Q2P4Y8</accession>
<keyword id="KW-0884">PQQ biosynthesis</keyword>
<organism>
    <name type="scientific">Xanthomonas oryzae pv. oryzae (strain MAFF 311018)</name>
    <dbReference type="NCBI Taxonomy" id="342109"/>
    <lineage>
        <taxon>Bacteria</taxon>
        <taxon>Pseudomonadati</taxon>
        <taxon>Pseudomonadota</taxon>
        <taxon>Gammaproteobacteria</taxon>
        <taxon>Lysobacterales</taxon>
        <taxon>Lysobacteraceae</taxon>
        <taxon>Xanthomonas</taxon>
    </lineage>
</organism>
<feature type="chain" id="PRO_1000061695" description="PqqA binding protein">
    <location>
        <begin position="1"/>
        <end position="92"/>
    </location>
</feature>
<protein>
    <recommendedName>
        <fullName evidence="1">PqqA binding protein</fullName>
    </recommendedName>
    <alternativeName>
        <fullName evidence="1">Coenzyme PQQ synthesis protein D</fullName>
    </alternativeName>
    <alternativeName>
        <fullName evidence="1">Pyrroloquinoline quinone biosynthesis protein D</fullName>
    </alternativeName>
</protein>
<comment type="function">
    <text evidence="1">Functions as a PqqA binding protein and presents PqqA to PqqE, in the pyrroloquinoline quinone (PQQ) biosynthetic pathway.</text>
</comment>
<comment type="pathway">
    <text evidence="1">Cofactor biosynthesis; pyrroloquinoline quinone biosynthesis.</text>
</comment>
<comment type="subunit">
    <text evidence="1">Monomer. Interacts with PqqE.</text>
</comment>
<comment type="similarity">
    <text evidence="1">Belongs to the PqqD family.</text>
</comment>
<evidence type="ECO:0000255" key="1">
    <source>
        <dbReference type="HAMAP-Rule" id="MF_00655"/>
    </source>
</evidence>
<reference key="1">
    <citation type="journal article" date="2005" name="Jpn. Agric. Res. Q.">
        <title>Genome sequence of Xanthomonas oryzae pv. oryzae suggests contribution of large numbers of effector genes and insertion sequences to its race diversity.</title>
        <authorList>
            <person name="Ochiai H."/>
            <person name="Inoue Y."/>
            <person name="Takeya M."/>
            <person name="Sasaki A."/>
            <person name="Kaku H."/>
        </authorList>
    </citation>
    <scope>NUCLEOTIDE SEQUENCE [LARGE SCALE GENOMIC DNA]</scope>
    <source>
        <strain>MAFF 311018</strain>
    </source>
</reference>
<proteinExistence type="inferred from homology"/>
<sequence length="92" mass="10326">MSSITRDSQPALRAGVRLQHDRTRDQWVLLAPERVVELDEIALVVAQRYDGTRSLAQIAQELAAEFDADAADIEADVIELTATLQQKRLLRL</sequence>
<gene>
    <name evidence="1" type="primary">pqqD</name>
    <name type="ordered locus">XOO1634</name>
</gene>